<gene>
    <name evidence="1" type="primary">tatA</name>
    <name type="ordered locus">Asuc_0664</name>
</gene>
<protein>
    <recommendedName>
        <fullName evidence="1">Sec-independent protein translocase protein TatA</fullName>
    </recommendedName>
</protein>
<proteinExistence type="inferred from homology"/>
<comment type="function">
    <text evidence="1">Part of the twin-arginine translocation (Tat) system that transports large folded proteins containing a characteristic twin-arginine motif in their signal peptide across membranes. TatA could form the protein-conducting channel of the Tat system.</text>
</comment>
<comment type="subunit">
    <text evidence="1">The Tat system comprises two distinct complexes: a TatABC complex, containing multiple copies of TatA, TatB and TatC subunits, and a separate TatA complex, containing only TatA subunits. Substrates initially bind to the TatABC complex, which probably triggers association of the separate TatA complex to form the active translocon.</text>
</comment>
<comment type="subcellular location">
    <subcellularLocation>
        <location evidence="1">Cell inner membrane</location>
        <topology evidence="1">Single-pass membrane protein</topology>
    </subcellularLocation>
</comment>
<comment type="similarity">
    <text evidence="1">Belongs to the TatA/E family.</text>
</comment>
<organism>
    <name type="scientific">Actinobacillus succinogenes (strain ATCC 55618 / DSM 22257 / CCUG 43843 / 130Z)</name>
    <dbReference type="NCBI Taxonomy" id="339671"/>
    <lineage>
        <taxon>Bacteria</taxon>
        <taxon>Pseudomonadati</taxon>
        <taxon>Pseudomonadota</taxon>
        <taxon>Gammaproteobacteria</taxon>
        <taxon>Pasteurellales</taxon>
        <taxon>Pasteurellaceae</taxon>
        <taxon>Actinobacillus</taxon>
    </lineage>
</organism>
<accession>A6VM40</accession>
<keyword id="KW-0997">Cell inner membrane</keyword>
<keyword id="KW-1003">Cell membrane</keyword>
<keyword id="KW-0472">Membrane</keyword>
<keyword id="KW-0653">Protein transport</keyword>
<keyword id="KW-1185">Reference proteome</keyword>
<keyword id="KW-0811">Translocation</keyword>
<keyword id="KW-0812">Transmembrane</keyword>
<keyword id="KW-1133">Transmembrane helix</keyword>
<keyword id="KW-0813">Transport</keyword>
<dbReference type="EMBL" id="CP000746">
    <property type="protein sequence ID" value="ABR74037.1"/>
    <property type="molecule type" value="Genomic_DNA"/>
</dbReference>
<dbReference type="RefSeq" id="WP_012072417.1">
    <property type="nucleotide sequence ID" value="NC_009655.1"/>
</dbReference>
<dbReference type="SMR" id="A6VM40"/>
<dbReference type="STRING" id="339671.Asuc_0664"/>
<dbReference type="KEGG" id="asu:Asuc_0664"/>
<dbReference type="eggNOG" id="COG1826">
    <property type="taxonomic scope" value="Bacteria"/>
</dbReference>
<dbReference type="HOGENOM" id="CLU_086034_5_1_6"/>
<dbReference type="OrthoDB" id="7066617at2"/>
<dbReference type="Proteomes" id="UP000001114">
    <property type="component" value="Chromosome"/>
</dbReference>
<dbReference type="GO" id="GO:0033281">
    <property type="term" value="C:TAT protein transport complex"/>
    <property type="evidence" value="ECO:0007669"/>
    <property type="project" value="UniProtKB-UniRule"/>
</dbReference>
<dbReference type="GO" id="GO:0008320">
    <property type="term" value="F:protein transmembrane transporter activity"/>
    <property type="evidence" value="ECO:0007669"/>
    <property type="project" value="UniProtKB-UniRule"/>
</dbReference>
<dbReference type="GO" id="GO:0043953">
    <property type="term" value="P:protein transport by the Tat complex"/>
    <property type="evidence" value="ECO:0007669"/>
    <property type="project" value="UniProtKB-UniRule"/>
</dbReference>
<dbReference type="FunFam" id="1.20.5.3310:FF:000001">
    <property type="entry name" value="Probable Sec-independent protein translocase protein TatE"/>
    <property type="match status" value="1"/>
</dbReference>
<dbReference type="Gene3D" id="1.20.5.3310">
    <property type="match status" value="1"/>
</dbReference>
<dbReference type="HAMAP" id="MF_00236">
    <property type="entry name" value="TatA_E"/>
    <property type="match status" value="1"/>
</dbReference>
<dbReference type="InterPro" id="IPR003369">
    <property type="entry name" value="TatA/B/E"/>
</dbReference>
<dbReference type="InterPro" id="IPR006312">
    <property type="entry name" value="TatA/E"/>
</dbReference>
<dbReference type="NCBIfam" id="NF002500">
    <property type="entry name" value="PRK01833.1"/>
    <property type="match status" value="1"/>
</dbReference>
<dbReference type="NCBIfam" id="TIGR01411">
    <property type="entry name" value="tatAE"/>
    <property type="match status" value="1"/>
</dbReference>
<dbReference type="PANTHER" id="PTHR42982">
    <property type="entry name" value="SEC-INDEPENDENT PROTEIN TRANSLOCASE PROTEIN TATA"/>
    <property type="match status" value="1"/>
</dbReference>
<dbReference type="PANTHER" id="PTHR42982:SF1">
    <property type="entry name" value="SEC-INDEPENDENT PROTEIN TRANSLOCASE PROTEIN TATA"/>
    <property type="match status" value="1"/>
</dbReference>
<dbReference type="Pfam" id="PF02416">
    <property type="entry name" value="TatA_B_E"/>
    <property type="match status" value="1"/>
</dbReference>
<feature type="chain" id="PRO_1000071804" description="Sec-independent protein translocase protein TatA">
    <location>
        <begin position="1"/>
        <end position="74"/>
    </location>
</feature>
<feature type="transmembrane region" description="Helical" evidence="1">
    <location>
        <begin position="1"/>
        <end position="21"/>
    </location>
</feature>
<feature type="region of interest" description="Disordered" evidence="2">
    <location>
        <begin position="45"/>
        <end position="74"/>
    </location>
</feature>
<sequence>MGGISIWQLLIIVAIVVLLFGTKKLRTLGSDLGESVKGFKKAMAEEPKDAEFKSLDKAENTAQTKKEEKEKEQA</sequence>
<name>TATA_ACTSZ</name>
<evidence type="ECO:0000255" key="1">
    <source>
        <dbReference type="HAMAP-Rule" id="MF_00236"/>
    </source>
</evidence>
<evidence type="ECO:0000256" key="2">
    <source>
        <dbReference type="SAM" id="MobiDB-lite"/>
    </source>
</evidence>
<reference key="1">
    <citation type="journal article" date="2010" name="BMC Genomics">
        <title>A genomic perspective on the potential of Actinobacillus succinogenes for industrial succinate production.</title>
        <authorList>
            <person name="McKinlay J.B."/>
            <person name="Laivenieks M."/>
            <person name="Schindler B.D."/>
            <person name="McKinlay A.A."/>
            <person name="Siddaramappa S."/>
            <person name="Challacombe J.F."/>
            <person name="Lowry S.R."/>
            <person name="Clum A."/>
            <person name="Lapidus A.L."/>
            <person name="Burkhart K.B."/>
            <person name="Harkins V."/>
            <person name="Vieille C."/>
        </authorList>
    </citation>
    <scope>NUCLEOTIDE SEQUENCE [LARGE SCALE GENOMIC DNA]</scope>
    <source>
        <strain>ATCC 55618 / DSM 22257 / CCUG 43843 / 130Z</strain>
    </source>
</reference>